<name>CP52M_DEBHN</name>
<accession>Q9Y758</accession>
<dbReference type="EC" id="1.14.14.-"/>
<dbReference type="EMBL" id="AF103949">
    <property type="protein sequence ID" value="AAD22537.1"/>
    <property type="molecule type" value="Genomic_DNA"/>
</dbReference>
<dbReference type="SMR" id="Q9Y758"/>
<dbReference type="VEuPathDB" id="FungiDB:DEHA2C02596g"/>
<dbReference type="GO" id="GO:0016020">
    <property type="term" value="C:membrane"/>
    <property type="evidence" value="ECO:0007669"/>
    <property type="project" value="UniProtKB-SubCell"/>
</dbReference>
<dbReference type="GO" id="GO:0020037">
    <property type="term" value="F:heme binding"/>
    <property type="evidence" value="ECO:0007669"/>
    <property type="project" value="InterPro"/>
</dbReference>
<dbReference type="GO" id="GO:0005506">
    <property type="term" value="F:iron ion binding"/>
    <property type="evidence" value="ECO:0007669"/>
    <property type="project" value="InterPro"/>
</dbReference>
<dbReference type="GO" id="GO:0016712">
    <property type="term" value="F:oxidoreductase activity, acting on paired donors, with incorporation or reduction of molecular oxygen, reduced flavin or flavoprotein as one donor, and incorporation of one atom of oxygen"/>
    <property type="evidence" value="ECO:0007669"/>
    <property type="project" value="InterPro"/>
</dbReference>
<dbReference type="CDD" id="cd11063">
    <property type="entry name" value="CYP52"/>
    <property type="match status" value="1"/>
</dbReference>
<dbReference type="Gene3D" id="1.10.630.10">
    <property type="entry name" value="Cytochrome P450"/>
    <property type="match status" value="1"/>
</dbReference>
<dbReference type="InterPro" id="IPR001128">
    <property type="entry name" value="Cyt_P450"/>
</dbReference>
<dbReference type="InterPro" id="IPR017972">
    <property type="entry name" value="Cyt_P450_CS"/>
</dbReference>
<dbReference type="InterPro" id="IPR002974">
    <property type="entry name" value="Cyt_P450_E_CYP52_ascomycetes"/>
</dbReference>
<dbReference type="InterPro" id="IPR047146">
    <property type="entry name" value="Cyt_P450_E_CYP52_fungi"/>
</dbReference>
<dbReference type="InterPro" id="IPR002402">
    <property type="entry name" value="Cyt_P450_E_grp-II"/>
</dbReference>
<dbReference type="InterPro" id="IPR036396">
    <property type="entry name" value="Cyt_P450_sf"/>
</dbReference>
<dbReference type="PANTHER" id="PTHR24287">
    <property type="entry name" value="P450, PUTATIVE (EUROFUNG)-RELATED"/>
    <property type="match status" value="1"/>
</dbReference>
<dbReference type="PANTHER" id="PTHR24287:SF1">
    <property type="entry name" value="P450, PUTATIVE (EUROFUNG)-RELATED"/>
    <property type="match status" value="1"/>
</dbReference>
<dbReference type="Pfam" id="PF00067">
    <property type="entry name" value="p450"/>
    <property type="match status" value="1"/>
</dbReference>
<dbReference type="PRINTS" id="PR00464">
    <property type="entry name" value="EP450II"/>
</dbReference>
<dbReference type="PRINTS" id="PR01239">
    <property type="entry name" value="EP450IICYP52"/>
</dbReference>
<dbReference type="PRINTS" id="PR00385">
    <property type="entry name" value="P450"/>
</dbReference>
<dbReference type="SUPFAM" id="SSF48264">
    <property type="entry name" value="Cytochrome P450"/>
    <property type="match status" value="1"/>
</dbReference>
<dbReference type="PROSITE" id="PS00086">
    <property type="entry name" value="CYTOCHROME_P450"/>
    <property type="match status" value="1"/>
</dbReference>
<protein>
    <recommendedName>
        <fullName>Cytochrome P450 52A13</fullName>
        <ecNumber>1.14.14.-</ecNumber>
    </recommendedName>
    <alternativeName>
        <fullName>Alkane hydroxylase 2</fullName>
    </alternativeName>
    <alternativeName>
        <fullName>Alkane-inducible p450alk 2</fullName>
    </alternativeName>
    <alternativeName>
        <fullName>DH-ALK2</fullName>
    </alternativeName>
</protein>
<sequence length="519" mass="59607">MSELLDSIQPYLTKWYVVISALLVSFFIAHKISVARFKATHNCAASPEYYKVNWFSLPLLYRLIQVKREGRLLDFAQKIYDDVKALTFVIKIVGVPVIITRDPENMKAVLATQFNDFALGTRHAHFKPLLGDGIFTLDGNGWKQSRSMLRPQFSREQVAHVQALEPHLQRLAKHIRLADGETINIQDLFFKLTVDTATEFLFGQSVYSLKDAAINDPPTEDFDGRSSFANSFNTAQTYLGTRAYLQMFYFIVNNSDFRKCCKQVHDFTRFYVQKGLDMTPEELEKKSENGYVFLYELVKQTRDPKVLQDQLLNILLAGRDTTAGLLSFTFFELARHPRVFNKLKEEIYEAFGKGDDARVSEITFESLKKCEYLKWVMNEMLRLYPSVPVNFRVATKRTTLPRGGGPDGNSPIYVGKGTTVAYSVYSTHRMEEYYGKDADEFKPERWAESRKLGWAYVPFNGGPRICLGQQFALTEASYIVTRLLQMFDKLELHDDRPYPPAKSVHLTMCHQDGVYVSLS</sequence>
<evidence type="ECO:0000250" key="1"/>
<evidence type="ECO:0000305" key="2"/>
<reference key="1">
    <citation type="journal article" date="1999" name="Gene">
        <title>Multiple p450alk (cytochrome P450 alkane hydroxylase) genes from the halotolerant yeast Debaryomyces hansenii.</title>
        <authorList>
            <person name="Yadav J.S."/>
            <person name="Loper J.C."/>
        </authorList>
    </citation>
    <scope>NUCLEOTIDE SEQUENCE [GENOMIC DNA]</scope>
    <source>
        <strain>ATCC 20317</strain>
    </source>
</reference>
<gene>
    <name type="primary">CYP52A13</name>
    <name type="synonym">ALK2</name>
</gene>
<feature type="chain" id="PRO_0000052031" description="Cytochrome P450 52A13">
    <location>
        <begin position="1"/>
        <end position="519"/>
    </location>
</feature>
<feature type="binding site" description="axial binding residue" evidence="1">
    <location>
        <position position="466"/>
    </location>
    <ligand>
        <name>heme</name>
        <dbReference type="ChEBI" id="CHEBI:30413"/>
    </ligand>
    <ligandPart>
        <name>Fe</name>
        <dbReference type="ChEBI" id="CHEBI:18248"/>
    </ligandPart>
</feature>
<proteinExistence type="evidence at transcript level"/>
<comment type="function">
    <text>Together with an NADPH cytochrome P450 the enzyme system catalyzes the terminal hydroxylation as the first step in the assimilation of alkanes and fatty acids.</text>
</comment>
<comment type="cofactor">
    <cofactor evidence="1">
        <name>heme</name>
        <dbReference type="ChEBI" id="CHEBI:30413"/>
    </cofactor>
</comment>
<comment type="subcellular location">
    <subcellularLocation>
        <location evidence="2">Membrane</location>
    </subcellularLocation>
</comment>
<comment type="induction">
    <text>By N-alkanes.</text>
</comment>
<comment type="similarity">
    <text evidence="2">Belongs to the cytochrome P450 family.</text>
</comment>
<keyword id="KW-0349">Heme</keyword>
<keyword id="KW-0408">Iron</keyword>
<keyword id="KW-0472">Membrane</keyword>
<keyword id="KW-0479">Metal-binding</keyword>
<keyword id="KW-0503">Monooxygenase</keyword>
<keyword id="KW-0560">Oxidoreductase</keyword>
<organism>
    <name type="scientific">Debaryomyces hansenii</name>
    <name type="common">Yeast</name>
    <name type="synonym">Torulaspora hansenii</name>
    <dbReference type="NCBI Taxonomy" id="4959"/>
    <lineage>
        <taxon>Eukaryota</taxon>
        <taxon>Fungi</taxon>
        <taxon>Dikarya</taxon>
        <taxon>Ascomycota</taxon>
        <taxon>Saccharomycotina</taxon>
        <taxon>Pichiomycetes</taxon>
        <taxon>Debaryomycetaceae</taxon>
        <taxon>Debaryomyces</taxon>
    </lineage>
</organism>